<keyword id="KW-0479">Metal-binding</keyword>
<keyword id="KW-0539">Nucleus</keyword>
<keyword id="KW-1185">Reference proteome</keyword>
<keyword id="KW-0832">Ubl conjugation</keyword>
<keyword id="KW-0833">Ubl conjugation pathway</keyword>
<keyword id="KW-0862">Zinc</keyword>
<feature type="chain" id="PRO_0000393880" description="Protein cereblon">
    <location>
        <begin position="1"/>
        <end position="671"/>
    </location>
</feature>
<feature type="domain" description="Lon N-terminal" evidence="3">
    <location>
        <begin position="309"/>
        <end position="537"/>
    </location>
</feature>
<feature type="domain" description="CULT" evidence="4">
    <location>
        <begin position="536"/>
        <end position="645"/>
    </location>
</feature>
<feature type="region of interest" description="Disordered" evidence="5">
    <location>
        <begin position="1"/>
        <end position="59"/>
    </location>
</feature>
<feature type="region of interest" description="Disordered" evidence="5">
    <location>
        <begin position="104"/>
        <end position="130"/>
    </location>
</feature>
<feature type="region of interest" description="Disordered" evidence="5">
    <location>
        <begin position="150"/>
        <end position="187"/>
    </location>
</feature>
<feature type="compositionally biased region" description="Acidic residues" evidence="5">
    <location>
        <begin position="1"/>
        <end position="11"/>
    </location>
</feature>
<feature type="compositionally biased region" description="Low complexity" evidence="5">
    <location>
        <begin position="39"/>
        <end position="51"/>
    </location>
</feature>
<feature type="compositionally biased region" description="Low complexity" evidence="5">
    <location>
        <begin position="105"/>
        <end position="115"/>
    </location>
</feature>
<feature type="compositionally biased region" description="Polar residues" evidence="5">
    <location>
        <begin position="162"/>
        <end position="173"/>
    </location>
</feature>
<feature type="binding site" evidence="4">
    <location>
        <position position="541"/>
    </location>
    <ligand>
        <name>Zn(2+)</name>
        <dbReference type="ChEBI" id="CHEBI:29105"/>
    </ligand>
</feature>
<feature type="binding site" evidence="4">
    <location>
        <position position="544"/>
    </location>
    <ligand>
        <name>Zn(2+)</name>
        <dbReference type="ChEBI" id="CHEBI:29105"/>
    </ligand>
</feature>
<feature type="binding site" evidence="4">
    <location>
        <position position="610"/>
    </location>
    <ligand>
        <name>Zn(2+)</name>
        <dbReference type="ChEBI" id="CHEBI:29105"/>
    </ligand>
</feature>
<feature type="binding site" evidence="4">
    <location>
        <position position="613"/>
    </location>
    <ligand>
        <name>Zn(2+)</name>
        <dbReference type="ChEBI" id="CHEBI:29105"/>
    </ligand>
</feature>
<gene>
    <name evidence="2" type="primary">ohgt</name>
    <name evidence="2" type="synonym">crbn</name>
    <name type="ORF">GH22576</name>
</gene>
<protein>
    <recommendedName>
        <fullName evidence="2">Protein cereblon</fullName>
    </recommendedName>
    <alternativeName>
        <fullName evidence="2">Protein ohgata</fullName>
    </alternativeName>
</protein>
<organism>
    <name type="scientific">Drosophila grimshawi</name>
    <name type="common">Hawaiian fruit fly</name>
    <name type="synonym">Idiomyia grimshawi</name>
    <dbReference type="NCBI Taxonomy" id="7222"/>
    <lineage>
        <taxon>Eukaryota</taxon>
        <taxon>Metazoa</taxon>
        <taxon>Ecdysozoa</taxon>
        <taxon>Arthropoda</taxon>
        <taxon>Hexapoda</taxon>
        <taxon>Insecta</taxon>
        <taxon>Pterygota</taxon>
        <taxon>Neoptera</taxon>
        <taxon>Endopterygota</taxon>
        <taxon>Diptera</taxon>
        <taxon>Brachycera</taxon>
        <taxon>Muscomorpha</taxon>
        <taxon>Ephydroidea</taxon>
        <taxon>Drosophilidae</taxon>
        <taxon>Drosophila</taxon>
        <taxon>Hawaiian Drosophila</taxon>
    </lineage>
</organism>
<dbReference type="EMBL" id="CH916373">
    <property type="protein sequence ID" value="EDV94752.1"/>
    <property type="molecule type" value="Genomic_DNA"/>
</dbReference>
<dbReference type="SMR" id="B4JSL2"/>
<dbReference type="FunCoup" id="B4JSL2">
    <property type="interactions" value="1448"/>
</dbReference>
<dbReference type="STRING" id="7222.B4JSL2"/>
<dbReference type="EnsemblMetazoa" id="FBtr0157990">
    <property type="protein sequence ID" value="FBpp0156482"/>
    <property type="gene ID" value="FBgn0130034"/>
</dbReference>
<dbReference type="EnsemblMetazoa" id="XM_001993980.3">
    <property type="protein sequence ID" value="XP_001994016.1"/>
    <property type="gene ID" value="LOC6567587"/>
</dbReference>
<dbReference type="GeneID" id="6567587"/>
<dbReference type="KEGG" id="dgr:6567587"/>
<dbReference type="CTD" id="41230"/>
<dbReference type="eggNOG" id="KOG1400">
    <property type="taxonomic scope" value="Eukaryota"/>
</dbReference>
<dbReference type="HOGENOM" id="CLU_028769_0_0_1"/>
<dbReference type="InParanoid" id="B4JSL2"/>
<dbReference type="OMA" id="SMRDKYQ"/>
<dbReference type="OrthoDB" id="267517at2759"/>
<dbReference type="PhylomeDB" id="B4JSL2"/>
<dbReference type="UniPathway" id="UPA00143"/>
<dbReference type="Proteomes" id="UP000001070">
    <property type="component" value="Unassembled WGS sequence"/>
</dbReference>
<dbReference type="GO" id="GO:0005634">
    <property type="term" value="C:nucleus"/>
    <property type="evidence" value="ECO:0007669"/>
    <property type="project" value="UniProtKB-SubCell"/>
</dbReference>
<dbReference type="GO" id="GO:0046872">
    <property type="term" value="F:metal ion binding"/>
    <property type="evidence" value="ECO:0007669"/>
    <property type="project" value="UniProtKB-KW"/>
</dbReference>
<dbReference type="GO" id="GO:1900075">
    <property type="term" value="P:positive regulation of neuromuscular synaptic transmission"/>
    <property type="evidence" value="ECO:0007669"/>
    <property type="project" value="EnsemblMetazoa"/>
</dbReference>
<dbReference type="GO" id="GO:0030177">
    <property type="term" value="P:positive regulation of Wnt signaling pathway"/>
    <property type="evidence" value="ECO:0007669"/>
    <property type="project" value="EnsemblMetazoa"/>
</dbReference>
<dbReference type="GO" id="GO:0016567">
    <property type="term" value="P:protein ubiquitination"/>
    <property type="evidence" value="ECO:0007669"/>
    <property type="project" value="UniProtKB-UniPathway"/>
</dbReference>
<dbReference type="CDD" id="cd15777">
    <property type="entry name" value="CRBN_C_like"/>
    <property type="match status" value="1"/>
</dbReference>
<dbReference type="FunFam" id="2.170.150.20:FF:000005">
    <property type="entry name" value="Blast:Protein cereblon homolog"/>
    <property type="match status" value="1"/>
</dbReference>
<dbReference type="Gene3D" id="1.20.58.1480">
    <property type="match status" value="1"/>
</dbReference>
<dbReference type="Gene3D" id="2.170.150.20">
    <property type="entry name" value="Peptide methionine sulfoxide reductase"/>
    <property type="match status" value="1"/>
</dbReference>
<dbReference type="InterPro" id="IPR034750">
    <property type="entry name" value="CULT"/>
</dbReference>
<dbReference type="InterPro" id="IPR003111">
    <property type="entry name" value="Lon_prtase_N"/>
</dbReference>
<dbReference type="InterPro" id="IPR004910">
    <property type="entry name" value="Yippee/Mis18/Cereblon"/>
</dbReference>
<dbReference type="Pfam" id="PF03226">
    <property type="entry name" value="Yippee-Mis18"/>
    <property type="match status" value="1"/>
</dbReference>
<dbReference type="PROSITE" id="PS51788">
    <property type="entry name" value="CULT"/>
    <property type="match status" value="1"/>
</dbReference>
<dbReference type="PROSITE" id="PS51787">
    <property type="entry name" value="LON_N"/>
    <property type="match status" value="1"/>
</dbReference>
<comment type="function">
    <text evidence="2">Substrate recognition component of a DCX (DDB1-CUL4-X-box) E3 protein ligase complex that mediates the ubiquitination and subsequent proteasomal degradation of target proteins. Has an essential role in mediating growth by negatively regulating insulin signaling. It also has a role in maintaining presynaptic function in the neuromuscular junction synapses of third-instar larvae.</text>
</comment>
<comment type="pathway">
    <text evidence="1">Protein modification; protein ubiquitination.</text>
</comment>
<comment type="subunit">
    <text evidence="1 2">Likely a component of a DCX (DDB1-CUL4-X-box) protein ligase complex (By similarity). May interact with pic/DDB1 (By similarity).</text>
</comment>
<comment type="subcellular location">
    <subcellularLocation>
        <location evidence="2">Nucleus</location>
    </subcellularLocation>
</comment>
<comment type="PTM">
    <text evidence="2">Ubiquitinated.</text>
</comment>
<comment type="similarity">
    <text evidence="6">Belongs to the CRBN family.</text>
</comment>
<name>CRBN_DROGR</name>
<accession>B4JSL2</accession>
<proteinExistence type="inferred from homology"/>
<reference key="1">
    <citation type="journal article" date="2007" name="Nature">
        <title>Evolution of genes and genomes on the Drosophila phylogeny.</title>
        <authorList>
            <consortium name="Drosophila 12 genomes consortium"/>
        </authorList>
    </citation>
    <scope>NUCLEOTIDE SEQUENCE [LARGE SCALE GENOMIC DNA]</scope>
    <source>
        <strain>Tucson 15287-2541.00</strain>
    </source>
</reference>
<sequence length="671" mass="75174">MDGEEAADIDETNSSNPHAAAVVATEMQAVAEAERPEEQQQQQMPQTSSGEADGDVDGDGVSAIAALATRVRLENMLEVVDNMFDEVSELMVDVTELMQRASELTGTTTPTPTAPENQAENAPEIEPAQPATPPEIAELLEEAIAANPLGHNVLNPGDDARSISSRHSGSDMSLDSPGSEDDSDAEAVPRWIIPENRVRSAVDMLVSQARNQDGGIATLLRRENFLQRVRSMVFSQDRVRGRESDEANLDAGNVVDEELSPELSPAPLDIDMEEGVRFDTNLPAEHSYFGPNLNRVPGVDYLEVGSTHRMLIFMHQHILFPGEVLPFMIDGSIIDEEIHDTGRDGVIFGVGFPLMQPPDDNPHKLYGVTCQIYEKGESGRQMVFYKSRALQRIVINCDDIQGPPQYIARNPTMKCYSKVKVLPEYFLPEPLKCIDMGSLNRFRDLPSMQDKFRRYQLTSTPWPLEACEEYSFEHIVEMARKKLEVHKIDTMPKCPIQLSYWLVRNLHLTEKMMRLTFLTDSVNTRLQIIGSTLKQESLFYCRYCNSSLAYCSDLFAMSKHGVQTQYCNSAGYIHETNTVYRIIAHAVGYSGEPSTEFSWFPGYQWHIIICKFCAQHVGWEFKAVDPNLAPKVFFGLAGSSVRIGKTSERTPTQGNPFVVRNLLHLVFREIE</sequence>
<evidence type="ECO:0000250" key="1">
    <source>
        <dbReference type="UniProtKB" id="Q96SW2"/>
    </source>
</evidence>
<evidence type="ECO:0000250" key="2">
    <source>
        <dbReference type="UniProtKB" id="Q9VH36"/>
    </source>
</evidence>
<evidence type="ECO:0000255" key="3">
    <source>
        <dbReference type="PROSITE-ProRule" id="PRU01123"/>
    </source>
</evidence>
<evidence type="ECO:0000255" key="4">
    <source>
        <dbReference type="PROSITE-ProRule" id="PRU01124"/>
    </source>
</evidence>
<evidence type="ECO:0000256" key="5">
    <source>
        <dbReference type="SAM" id="MobiDB-lite"/>
    </source>
</evidence>
<evidence type="ECO:0000305" key="6"/>